<reference key="1">
    <citation type="journal article" date="1998" name="Science">
        <title>Genome sequence of the nematode C. elegans: a platform for investigating biology.</title>
        <authorList>
            <consortium name="The C. elegans sequencing consortium"/>
        </authorList>
    </citation>
    <scope>NUCLEOTIDE SEQUENCE [LARGE SCALE GENOMIC DNA]</scope>
    <source>
        <strain>Bristol N2</strain>
    </source>
</reference>
<protein>
    <recommendedName>
        <fullName>Probable calcium-binding mitochondrial carrier F17E5.2</fullName>
    </recommendedName>
</protein>
<organism>
    <name type="scientific">Caenorhabditis elegans</name>
    <dbReference type="NCBI Taxonomy" id="6239"/>
    <lineage>
        <taxon>Eukaryota</taxon>
        <taxon>Metazoa</taxon>
        <taxon>Ecdysozoa</taxon>
        <taxon>Nematoda</taxon>
        <taxon>Chromadorea</taxon>
        <taxon>Rhabditida</taxon>
        <taxon>Rhabditina</taxon>
        <taxon>Rhabditomorpha</taxon>
        <taxon>Rhabditoidea</taxon>
        <taxon>Rhabditidae</taxon>
        <taxon>Peloderinae</taxon>
        <taxon>Caenorhabditis</taxon>
    </lineage>
</organism>
<proteinExistence type="inferred from homology"/>
<comment type="function">
    <text evidence="1">Calcium-dependent mitochondrial solute carrier.</text>
</comment>
<comment type="subcellular location">
    <subcellularLocation>
        <location evidence="1">Mitochondrion inner membrane</location>
        <topology evidence="1">Multi-pass membrane protein</topology>
    </subcellularLocation>
</comment>
<comment type="similarity">
    <text evidence="4">Belongs to the mitochondrial carrier (TC 2.A.29) family.</text>
</comment>
<accession>Q19529</accession>
<name>CMC3_CAEEL</name>
<gene>
    <name type="ORF">F17E5.2</name>
</gene>
<keyword id="KW-0106">Calcium</keyword>
<keyword id="KW-0472">Membrane</keyword>
<keyword id="KW-0479">Metal-binding</keyword>
<keyword id="KW-0496">Mitochondrion</keyword>
<keyword id="KW-0999">Mitochondrion inner membrane</keyword>
<keyword id="KW-1185">Reference proteome</keyword>
<keyword id="KW-0677">Repeat</keyword>
<keyword id="KW-0812">Transmembrane</keyword>
<keyword id="KW-1133">Transmembrane helix</keyword>
<keyword id="KW-0813">Transport</keyword>
<evidence type="ECO:0000250" key="1"/>
<evidence type="ECO:0000255" key="2"/>
<evidence type="ECO:0000255" key="3">
    <source>
        <dbReference type="PROSITE-ProRule" id="PRU00448"/>
    </source>
</evidence>
<evidence type="ECO:0000305" key="4"/>
<dbReference type="EMBL" id="Z50873">
    <property type="protein sequence ID" value="CAA90761.4"/>
    <property type="molecule type" value="Genomic_DNA"/>
</dbReference>
<dbReference type="PIR" id="G89667">
    <property type="entry name" value="G89667"/>
</dbReference>
<dbReference type="PIR" id="T21074">
    <property type="entry name" value="T21074"/>
</dbReference>
<dbReference type="RefSeq" id="NP_510081.3">
    <property type="nucleotide sequence ID" value="NM_077680.5"/>
</dbReference>
<dbReference type="SMR" id="Q19529"/>
<dbReference type="BioGRID" id="46304">
    <property type="interactions" value="2"/>
</dbReference>
<dbReference type="FunCoup" id="Q19529">
    <property type="interactions" value="2533"/>
</dbReference>
<dbReference type="STRING" id="6239.F17E5.2.1"/>
<dbReference type="PaxDb" id="6239-F17E5.2"/>
<dbReference type="PeptideAtlas" id="Q19529"/>
<dbReference type="EnsemblMetazoa" id="F17E5.2.1">
    <property type="protein sequence ID" value="F17E5.2.1"/>
    <property type="gene ID" value="WBGene00008924"/>
</dbReference>
<dbReference type="EnsemblMetazoa" id="F17E5.2.2">
    <property type="protein sequence ID" value="F17E5.2.2"/>
    <property type="gene ID" value="WBGene00008924"/>
</dbReference>
<dbReference type="GeneID" id="181399"/>
<dbReference type="KEGG" id="cel:CELE_F17E5.2"/>
<dbReference type="UCSC" id="F17E5.2">
    <property type="organism name" value="c. elegans"/>
</dbReference>
<dbReference type="AGR" id="WB:WBGene00008924"/>
<dbReference type="CTD" id="181399"/>
<dbReference type="WormBase" id="F17E5.2">
    <property type="protein sequence ID" value="CE37355"/>
    <property type="gene ID" value="WBGene00008924"/>
</dbReference>
<dbReference type="eggNOG" id="KOG0036">
    <property type="taxonomic scope" value="Eukaryota"/>
</dbReference>
<dbReference type="GeneTree" id="ENSGT00940000170889"/>
<dbReference type="HOGENOM" id="CLU_015166_2_0_1"/>
<dbReference type="InParanoid" id="Q19529"/>
<dbReference type="OMA" id="VISYAEW"/>
<dbReference type="OrthoDB" id="270584at2759"/>
<dbReference type="PhylomeDB" id="Q19529"/>
<dbReference type="PRO" id="PR:Q19529"/>
<dbReference type="Proteomes" id="UP000001940">
    <property type="component" value="Chromosome X"/>
</dbReference>
<dbReference type="Bgee" id="WBGene00008924">
    <property type="expression patterns" value="Expressed in embryo and 3 other cell types or tissues"/>
</dbReference>
<dbReference type="GO" id="GO:0005743">
    <property type="term" value="C:mitochondrial inner membrane"/>
    <property type="evidence" value="ECO:0007669"/>
    <property type="project" value="UniProtKB-SubCell"/>
</dbReference>
<dbReference type="GO" id="GO:0005347">
    <property type="term" value="F:ATP transmembrane transporter activity"/>
    <property type="evidence" value="ECO:0000318"/>
    <property type="project" value="GO_Central"/>
</dbReference>
<dbReference type="GO" id="GO:0005509">
    <property type="term" value="F:calcium ion binding"/>
    <property type="evidence" value="ECO:0007669"/>
    <property type="project" value="InterPro"/>
</dbReference>
<dbReference type="GO" id="GO:0015866">
    <property type="term" value="P:ADP transport"/>
    <property type="evidence" value="ECO:0000318"/>
    <property type="project" value="GO_Central"/>
</dbReference>
<dbReference type="GO" id="GO:0015867">
    <property type="term" value="P:ATP transport"/>
    <property type="evidence" value="ECO:0000318"/>
    <property type="project" value="GO_Central"/>
</dbReference>
<dbReference type="CDD" id="cd00051">
    <property type="entry name" value="EFh"/>
    <property type="match status" value="1"/>
</dbReference>
<dbReference type="FunFam" id="1.10.238.10:FF:000369">
    <property type="entry name" value="Probable calcium-binding mitochondrial carrier CBG00135"/>
    <property type="match status" value="1"/>
</dbReference>
<dbReference type="FunFam" id="1.10.238.10:FF:000028">
    <property type="entry name" value="Putative calcium-binding mitochondrial carrier protein scamc-2"/>
    <property type="match status" value="1"/>
</dbReference>
<dbReference type="FunFam" id="1.50.40.10:FF:000003">
    <property type="entry name" value="Putative calcium-binding mitochondrial carrier protein scamc-2"/>
    <property type="match status" value="1"/>
</dbReference>
<dbReference type="Gene3D" id="1.10.238.10">
    <property type="entry name" value="EF-hand"/>
    <property type="match status" value="2"/>
</dbReference>
<dbReference type="Gene3D" id="1.50.40.10">
    <property type="entry name" value="Mitochondrial carrier domain"/>
    <property type="match status" value="1"/>
</dbReference>
<dbReference type="InterPro" id="IPR011992">
    <property type="entry name" value="EF-hand-dom_pair"/>
</dbReference>
<dbReference type="InterPro" id="IPR018247">
    <property type="entry name" value="EF_Hand_1_Ca_BS"/>
</dbReference>
<dbReference type="InterPro" id="IPR002048">
    <property type="entry name" value="EF_hand_dom"/>
</dbReference>
<dbReference type="InterPro" id="IPR002067">
    <property type="entry name" value="Mit_carrier"/>
</dbReference>
<dbReference type="InterPro" id="IPR018108">
    <property type="entry name" value="Mitochondrial_sb/sol_carrier"/>
</dbReference>
<dbReference type="InterPro" id="IPR023395">
    <property type="entry name" value="Mt_carrier_dom_sf"/>
</dbReference>
<dbReference type="PANTHER" id="PTHR24089">
    <property type="entry name" value="SOLUTE CARRIER FAMILY 25"/>
    <property type="match status" value="1"/>
</dbReference>
<dbReference type="Pfam" id="PF13499">
    <property type="entry name" value="EF-hand_7"/>
    <property type="match status" value="1"/>
</dbReference>
<dbReference type="Pfam" id="PF00153">
    <property type="entry name" value="Mito_carr"/>
    <property type="match status" value="3"/>
</dbReference>
<dbReference type="PRINTS" id="PR00926">
    <property type="entry name" value="MITOCARRIER"/>
</dbReference>
<dbReference type="SMART" id="SM00054">
    <property type="entry name" value="EFh"/>
    <property type="match status" value="3"/>
</dbReference>
<dbReference type="SUPFAM" id="SSF47473">
    <property type="entry name" value="EF-hand"/>
    <property type="match status" value="1"/>
</dbReference>
<dbReference type="SUPFAM" id="SSF103506">
    <property type="entry name" value="Mitochondrial carrier"/>
    <property type="match status" value="1"/>
</dbReference>
<dbReference type="PROSITE" id="PS00018">
    <property type="entry name" value="EF_HAND_1"/>
    <property type="match status" value="2"/>
</dbReference>
<dbReference type="PROSITE" id="PS50222">
    <property type="entry name" value="EF_HAND_2"/>
    <property type="match status" value="3"/>
</dbReference>
<dbReference type="PROSITE" id="PS50920">
    <property type="entry name" value="SOLCAR"/>
    <property type="match status" value="3"/>
</dbReference>
<sequence length="531" mass="59275">MSVTAESPSLRGGSILENKQELIDLKNIGEHARTVQPFKTSKHQPLIQGSVSKEAAIATHSALHFDLTPEKEKKIRDMYDRLDADNDGSIDIRDLTQALSLQAHIPASVAPKLLERMKSEHSDRVTYADFTNYVIAHEARLAEVFDKIDLNSDGEVDMAEIKSYCKEMGVNLDDQKAMSIVKKMDQSGSSSVNLNEFQDFMLLYPSTDMRDMVDFWRHNLIIDIGEDGQVPEDFTPQELLSGVWWRHLVAGGVAGAMSRTCTAPFDRIKVYLQVNSTKTNKLGVVSCVHLLHAEGGIKSFWRGNGINVIKIAPESAMKFMCYDQIKRWMQEYKGGAELSTIERLLAGSSAGAISQTAIYPMEVMKTRLALRRTGQLDKGMFHFAHKMYTKEGIKCFYKGYLPNLLGIIPYAGIDLTVYESLKSMYTKYYTEHTEPGVLALLACGTCSSTCGQLASYPLALVRTRLQARAISPKNSTQPDTMVGQFKHILQTEGFTGLYRGITPNFMKVIPAVSISYVVYEKVRKQLGATMT</sequence>
<feature type="chain" id="PRO_0000090605" description="Probable calcium-binding mitochondrial carrier F17E5.2">
    <location>
        <begin position="1"/>
        <end position="531"/>
    </location>
</feature>
<feature type="transmembrane region" description="Helical; Name=1" evidence="2">
    <location>
        <begin position="248"/>
        <end position="265"/>
    </location>
</feature>
<feature type="transmembrane region" description="Helical; Name=2" evidence="2">
    <location>
        <begin position="303"/>
        <end position="322"/>
    </location>
</feature>
<feature type="transmembrane region" description="Helical; Name=3" evidence="2">
    <location>
        <begin position="348"/>
        <end position="361"/>
    </location>
</feature>
<feature type="transmembrane region" description="Helical; Name=4" evidence="2">
    <location>
        <begin position="399"/>
        <end position="418"/>
    </location>
</feature>
<feature type="transmembrane region" description="Helical; Name=5" evidence="2">
    <location>
        <begin position="441"/>
        <end position="458"/>
    </location>
</feature>
<feature type="transmembrane region" description="Helical; Name=6" evidence="2">
    <location>
        <begin position="500"/>
        <end position="517"/>
    </location>
</feature>
<feature type="domain" description="EF-hand 1" evidence="3">
    <location>
        <begin position="70"/>
        <end position="105"/>
    </location>
</feature>
<feature type="domain" description="EF-hand 2" evidence="4">
    <location>
        <begin position="106"/>
        <end position="135"/>
    </location>
</feature>
<feature type="domain" description="EF-hand 3" evidence="3">
    <location>
        <begin position="136"/>
        <end position="171"/>
    </location>
</feature>
<feature type="domain" description="EF-hand 4" evidence="3">
    <location>
        <begin position="172"/>
        <end position="207"/>
    </location>
</feature>
<feature type="repeat" description="Solcar 1">
    <location>
        <begin position="242"/>
        <end position="328"/>
    </location>
</feature>
<feature type="repeat" description="Solcar 2">
    <location>
        <begin position="338"/>
        <end position="424"/>
    </location>
</feature>
<feature type="repeat" description="Solcar 3">
    <location>
        <begin position="435"/>
        <end position="525"/>
    </location>
</feature>
<feature type="binding site" evidence="3">
    <location>
        <position position="83"/>
    </location>
    <ligand>
        <name>Ca(2+)</name>
        <dbReference type="ChEBI" id="CHEBI:29108"/>
        <label>1</label>
    </ligand>
</feature>
<feature type="binding site" evidence="3">
    <location>
        <position position="85"/>
    </location>
    <ligand>
        <name>Ca(2+)</name>
        <dbReference type="ChEBI" id="CHEBI:29108"/>
        <label>1</label>
    </ligand>
</feature>
<feature type="binding site" evidence="3">
    <location>
        <position position="87"/>
    </location>
    <ligand>
        <name>Ca(2+)</name>
        <dbReference type="ChEBI" id="CHEBI:29108"/>
        <label>1</label>
    </ligand>
</feature>
<feature type="binding site" evidence="3">
    <location>
        <position position="89"/>
    </location>
    <ligand>
        <name>Ca(2+)</name>
        <dbReference type="ChEBI" id="CHEBI:29108"/>
        <label>1</label>
    </ligand>
</feature>
<feature type="binding site" evidence="3">
    <location>
        <position position="94"/>
    </location>
    <ligand>
        <name>Ca(2+)</name>
        <dbReference type="ChEBI" id="CHEBI:29108"/>
        <label>1</label>
    </ligand>
</feature>
<feature type="binding site" evidence="3">
    <location>
        <position position="149"/>
    </location>
    <ligand>
        <name>Ca(2+)</name>
        <dbReference type="ChEBI" id="CHEBI:29108"/>
        <label>2</label>
    </ligand>
</feature>
<feature type="binding site" evidence="3">
    <location>
        <position position="151"/>
    </location>
    <ligand>
        <name>Ca(2+)</name>
        <dbReference type="ChEBI" id="CHEBI:29108"/>
        <label>2</label>
    </ligand>
</feature>
<feature type="binding site" evidence="3">
    <location>
        <position position="153"/>
    </location>
    <ligand>
        <name>Ca(2+)</name>
        <dbReference type="ChEBI" id="CHEBI:29108"/>
        <label>2</label>
    </ligand>
</feature>
<feature type="binding site" evidence="3">
    <location>
        <position position="155"/>
    </location>
    <ligand>
        <name>Ca(2+)</name>
        <dbReference type="ChEBI" id="CHEBI:29108"/>
        <label>2</label>
    </ligand>
</feature>
<feature type="binding site" evidence="3">
    <location>
        <position position="160"/>
    </location>
    <ligand>
        <name>Ca(2+)</name>
        <dbReference type="ChEBI" id="CHEBI:29108"/>
        <label>2</label>
    </ligand>
</feature>